<proteinExistence type="inferred from homology"/>
<protein>
    <recommendedName>
        <fullName evidence="1">Large ribosomal subunit protein bL28</fullName>
    </recommendedName>
    <alternativeName>
        <fullName evidence="2">50S ribosomal protein L28</fullName>
    </alternativeName>
</protein>
<dbReference type="EMBL" id="CP000683">
    <property type="protein sequence ID" value="ABV84442.1"/>
    <property type="molecule type" value="Genomic_DNA"/>
</dbReference>
<dbReference type="RefSeq" id="WP_004996729.1">
    <property type="nucleotide sequence ID" value="NC_009900.1"/>
</dbReference>
<dbReference type="SMR" id="A8F0K6"/>
<dbReference type="GeneID" id="95361857"/>
<dbReference type="KEGG" id="rms:RMA_0140"/>
<dbReference type="HOGENOM" id="CLU_064548_4_2_5"/>
<dbReference type="Proteomes" id="UP000001311">
    <property type="component" value="Chromosome"/>
</dbReference>
<dbReference type="GO" id="GO:1990904">
    <property type="term" value="C:ribonucleoprotein complex"/>
    <property type="evidence" value="ECO:0007669"/>
    <property type="project" value="UniProtKB-KW"/>
</dbReference>
<dbReference type="GO" id="GO:0005840">
    <property type="term" value="C:ribosome"/>
    <property type="evidence" value="ECO:0007669"/>
    <property type="project" value="UniProtKB-KW"/>
</dbReference>
<dbReference type="GO" id="GO:0003735">
    <property type="term" value="F:structural constituent of ribosome"/>
    <property type="evidence" value="ECO:0007669"/>
    <property type="project" value="InterPro"/>
</dbReference>
<dbReference type="GO" id="GO:0006412">
    <property type="term" value="P:translation"/>
    <property type="evidence" value="ECO:0007669"/>
    <property type="project" value="UniProtKB-UniRule"/>
</dbReference>
<dbReference type="Gene3D" id="2.30.170.40">
    <property type="entry name" value="Ribosomal protein L28/L24"/>
    <property type="match status" value="1"/>
</dbReference>
<dbReference type="HAMAP" id="MF_00373">
    <property type="entry name" value="Ribosomal_bL28"/>
    <property type="match status" value="1"/>
</dbReference>
<dbReference type="InterPro" id="IPR026569">
    <property type="entry name" value="Ribosomal_bL28"/>
</dbReference>
<dbReference type="InterPro" id="IPR034704">
    <property type="entry name" value="Ribosomal_bL28/bL31-like_sf"/>
</dbReference>
<dbReference type="InterPro" id="IPR001383">
    <property type="entry name" value="Ribosomal_bL28_bact-type"/>
</dbReference>
<dbReference type="InterPro" id="IPR037147">
    <property type="entry name" value="Ribosomal_bL28_sf"/>
</dbReference>
<dbReference type="NCBIfam" id="TIGR00009">
    <property type="entry name" value="L28"/>
    <property type="match status" value="1"/>
</dbReference>
<dbReference type="PANTHER" id="PTHR13528">
    <property type="entry name" value="39S RIBOSOMAL PROTEIN L28, MITOCHONDRIAL"/>
    <property type="match status" value="1"/>
</dbReference>
<dbReference type="PANTHER" id="PTHR13528:SF2">
    <property type="entry name" value="LARGE RIBOSOMAL SUBUNIT PROTEIN BL28M"/>
    <property type="match status" value="1"/>
</dbReference>
<dbReference type="Pfam" id="PF00830">
    <property type="entry name" value="Ribosomal_L28"/>
    <property type="match status" value="1"/>
</dbReference>
<dbReference type="SUPFAM" id="SSF143800">
    <property type="entry name" value="L28p-like"/>
    <property type="match status" value="1"/>
</dbReference>
<gene>
    <name evidence="1" type="primary">rpmB</name>
    <name type="ordered locus">RMA_0140</name>
</gene>
<accession>A8F0K6</accession>
<feature type="chain" id="PRO_1000059956" description="Large ribosomal subunit protein bL28">
    <location>
        <begin position="1"/>
        <end position="97"/>
    </location>
</feature>
<comment type="similarity">
    <text evidence="1">Belongs to the bacterial ribosomal protein bL28 family.</text>
</comment>
<evidence type="ECO:0000255" key="1">
    <source>
        <dbReference type="HAMAP-Rule" id="MF_00373"/>
    </source>
</evidence>
<evidence type="ECO:0000305" key="2"/>
<keyword id="KW-0687">Ribonucleoprotein</keyword>
<keyword id="KW-0689">Ribosomal protein</keyword>
<reference key="1">
    <citation type="journal article" date="2007" name="Genome Res.">
        <title>Lateral gene transfer between obligate intracellular bacteria: evidence from the Rickettsia massiliae genome.</title>
        <authorList>
            <person name="Blanc G."/>
            <person name="Ogata H."/>
            <person name="Robert C."/>
            <person name="Audic S."/>
            <person name="Claverie J.-M."/>
            <person name="Raoult D."/>
        </authorList>
    </citation>
    <scope>NUCLEOTIDE SEQUENCE [LARGE SCALE GENOMIC DNA]</scope>
    <source>
        <strain>Mtu5</strain>
    </source>
</reference>
<sequence length="97" mass="10766">MSRKCELTGVGVLYGNNVSHSQRKTRRRFEPNLRSVKFTSDITAGEYRLSVNARCISSVEKAGGFDAYILKADDNVLSSNARAIKKKIIQTKTAKSL</sequence>
<name>RL28_RICM5</name>
<organism>
    <name type="scientific">Rickettsia massiliae (strain Mtu5)</name>
    <dbReference type="NCBI Taxonomy" id="416276"/>
    <lineage>
        <taxon>Bacteria</taxon>
        <taxon>Pseudomonadati</taxon>
        <taxon>Pseudomonadota</taxon>
        <taxon>Alphaproteobacteria</taxon>
        <taxon>Rickettsiales</taxon>
        <taxon>Rickettsiaceae</taxon>
        <taxon>Rickettsieae</taxon>
        <taxon>Rickettsia</taxon>
        <taxon>spotted fever group</taxon>
    </lineage>
</organism>